<gene>
    <name evidence="1" type="primary">secA</name>
    <name type="ordered locus">PMT_0083</name>
</gene>
<reference key="1">
    <citation type="journal article" date="2003" name="Nature">
        <title>Genome divergence in two Prochlorococcus ecotypes reflects oceanic niche differentiation.</title>
        <authorList>
            <person name="Rocap G."/>
            <person name="Larimer F.W."/>
            <person name="Lamerdin J.E."/>
            <person name="Malfatti S."/>
            <person name="Chain P."/>
            <person name="Ahlgren N.A."/>
            <person name="Arellano A."/>
            <person name="Coleman M."/>
            <person name="Hauser L."/>
            <person name="Hess W.R."/>
            <person name="Johnson Z.I."/>
            <person name="Land M.L."/>
            <person name="Lindell D."/>
            <person name="Post A.F."/>
            <person name="Regala W."/>
            <person name="Shah M."/>
            <person name="Shaw S.L."/>
            <person name="Steglich C."/>
            <person name="Sullivan M.B."/>
            <person name="Ting C.S."/>
            <person name="Tolonen A."/>
            <person name="Webb E.A."/>
            <person name="Zinser E.R."/>
            <person name="Chisholm S.W."/>
        </authorList>
    </citation>
    <scope>NUCLEOTIDE SEQUENCE [LARGE SCALE GENOMIC DNA]</scope>
    <source>
        <strain>MIT 9313</strain>
    </source>
</reference>
<evidence type="ECO:0000255" key="1">
    <source>
        <dbReference type="HAMAP-Rule" id="MF_01382"/>
    </source>
</evidence>
<organism>
    <name type="scientific">Prochlorococcus marinus (strain MIT 9313)</name>
    <dbReference type="NCBI Taxonomy" id="74547"/>
    <lineage>
        <taxon>Bacteria</taxon>
        <taxon>Bacillati</taxon>
        <taxon>Cyanobacteriota</taxon>
        <taxon>Cyanophyceae</taxon>
        <taxon>Synechococcales</taxon>
        <taxon>Prochlorococcaceae</taxon>
        <taxon>Prochlorococcus</taxon>
    </lineage>
</organism>
<name>SECA_PROMM</name>
<protein>
    <recommendedName>
        <fullName evidence="1">Protein translocase subunit SecA</fullName>
        <ecNumber evidence="1">7.4.2.8</ecNumber>
    </recommendedName>
</protein>
<feature type="chain" id="PRO_0000318409" description="Protein translocase subunit SecA">
    <location>
        <begin position="1"/>
        <end position="948"/>
    </location>
</feature>
<feature type="binding site" evidence="1">
    <location>
        <position position="90"/>
    </location>
    <ligand>
        <name>ATP</name>
        <dbReference type="ChEBI" id="CHEBI:30616"/>
    </ligand>
</feature>
<feature type="binding site" evidence="1">
    <location>
        <begin position="108"/>
        <end position="112"/>
    </location>
    <ligand>
        <name>ATP</name>
        <dbReference type="ChEBI" id="CHEBI:30616"/>
    </ligand>
</feature>
<feature type="binding site" evidence="1">
    <location>
        <position position="509"/>
    </location>
    <ligand>
        <name>ATP</name>
        <dbReference type="ChEBI" id="CHEBI:30616"/>
    </ligand>
</feature>
<proteinExistence type="inferred from homology"/>
<dbReference type="EC" id="7.4.2.8" evidence="1"/>
<dbReference type="EMBL" id="BX548175">
    <property type="protein sequence ID" value="CAE20258.1"/>
    <property type="molecule type" value="Genomic_DNA"/>
</dbReference>
<dbReference type="RefSeq" id="WP_011129462.1">
    <property type="nucleotide sequence ID" value="NC_005071.1"/>
</dbReference>
<dbReference type="SMR" id="Q7V975"/>
<dbReference type="KEGG" id="pmt:PMT_0083"/>
<dbReference type="eggNOG" id="COG0653">
    <property type="taxonomic scope" value="Bacteria"/>
</dbReference>
<dbReference type="HOGENOM" id="CLU_005314_3_0_3"/>
<dbReference type="OrthoDB" id="9805579at2"/>
<dbReference type="Proteomes" id="UP000001423">
    <property type="component" value="Chromosome"/>
</dbReference>
<dbReference type="GO" id="GO:0031522">
    <property type="term" value="C:cell envelope Sec protein transport complex"/>
    <property type="evidence" value="ECO:0007669"/>
    <property type="project" value="TreeGrafter"/>
</dbReference>
<dbReference type="GO" id="GO:0005829">
    <property type="term" value="C:cytosol"/>
    <property type="evidence" value="ECO:0007669"/>
    <property type="project" value="TreeGrafter"/>
</dbReference>
<dbReference type="GO" id="GO:0031676">
    <property type="term" value="C:plasma membrane-derived thylakoid membrane"/>
    <property type="evidence" value="ECO:0007669"/>
    <property type="project" value="UniProtKB-SubCell"/>
</dbReference>
<dbReference type="GO" id="GO:0005524">
    <property type="term" value="F:ATP binding"/>
    <property type="evidence" value="ECO:0007669"/>
    <property type="project" value="UniProtKB-UniRule"/>
</dbReference>
<dbReference type="GO" id="GO:0008564">
    <property type="term" value="F:protein-exporting ATPase activity"/>
    <property type="evidence" value="ECO:0007669"/>
    <property type="project" value="UniProtKB-EC"/>
</dbReference>
<dbReference type="GO" id="GO:0065002">
    <property type="term" value="P:intracellular protein transmembrane transport"/>
    <property type="evidence" value="ECO:0007669"/>
    <property type="project" value="UniProtKB-UniRule"/>
</dbReference>
<dbReference type="GO" id="GO:0017038">
    <property type="term" value="P:protein import"/>
    <property type="evidence" value="ECO:0007669"/>
    <property type="project" value="InterPro"/>
</dbReference>
<dbReference type="GO" id="GO:0006605">
    <property type="term" value="P:protein targeting"/>
    <property type="evidence" value="ECO:0007669"/>
    <property type="project" value="UniProtKB-UniRule"/>
</dbReference>
<dbReference type="GO" id="GO:0043952">
    <property type="term" value="P:protein transport by the Sec complex"/>
    <property type="evidence" value="ECO:0007669"/>
    <property type="project" value="TreeGrafter"/>
</dbReference>
<dbReference type="CDD" id="cd17928">
    <property type="entry name" value="DEXDc_SecA"/>
    <property type="match status" value="1"/>
</dbReference>
<dbReference type="CDD" id="cd18803">
    <property type="entry name" value="SF2_C_secA"/>
    <property type="match status" value="1"/>
</dbReference>
<dbReference type="FunFam" id="3.90.1440.10:FF:000003">
    <property type="entry name" value="Preprotein translocase SecA subunit"/>
    <property type="match status" value="1"/>
</dbReference>
<dbReference type="FunFam" id="3.40.50.300:FF:000429">
    <property type="entry name" value="Preprotein translocase subunit SecA"/>
    <property type="match status" value="1"/>
</dbReference>
<dbReference type="FunFam" id="1.10.3060.10:FF:000003">
    <property type="entry name" value="Protein translocase subunit SecA"/>
    <property type="match status" value="1"/>
</dbReference>
<dbReference type="FunFam" id="3.40.50.300:FF:000334">
    <property type="entry name" value="Protein translocase subunit SecA"/>
    <property type="match status" value="1"/>
</dbReference>
<dbReference type="Gene3D" id="1.10.3060.10">
    <property type="entry name" value="Helical scaffold and wing domains of SecA"/>
    <property type="match status" value="1"/>
</dbReference>
<dbReference type="Gene3D" id="3.40.50.300">
    <property type="entry name" value="P-loop containing nucleotide triphosphate hydrolases"/>
    <property type="match status" value="2"/>
</dbReference>
<dbReference type="Gene3D" id="3.90.1440.10">
    <property type="entry name" value="SecA, preprotein cross-linking domain"/>
    <property type="match status" value="1"/>
</dbReference>
<dbReference type="HAMAP" id="MF_01382">
    <property type="entry name" value="SecA"/>
    <property type="match status" value="1"/>
</dbReference>
<dbReference type="InterPro" id="IPR014001">
    <property type="entry name" value="Helicase_ATP-bd"/>
</dbReference>
<dbReference type="InterPro" id="IPR027417">
    <property type="entry name" value="P-loop_NTPase"/>
</dbReference>
<dbReference type="InterPro" id="IPR000185">
    <property type="entry name" value="SecA"/>
</dbReference>
<dbReference type="InterPro" id="IPR020937">
    <property type="entry name" value="SecA_CS"/>
</dbReference>
<dbReference type="InterPro" id="IPR011115">
    <property type="entry name" value="SecA_DEAD"/>
</dbReference>
<dbReference type="InterPro" id="IPR014018">
    <property type="entry name" value="SecA_motor_DEAD"/>
</dbReference>
<dbReference type="InterPro" id="IPR011130">
    <property type="entry name" value="SecA_preprotein_X-link_dom"/>
</dbReference>
<dbReference type="InterPro" id="IPR044722">
    <property type="entry name" value="SecA_SF2_C"/>
</dbReference>
<dbReference type="InterPro" id="IPR011116">
    <property type="entry name" value="SecA_Wing/Scaffold"/>
</dbReference>
<dbReference type="InterPro" id="IPR036266">
    <property type="entry name" value="SecA_Wing/Scaffold_sf"/>
</dbReference>
<dbReference type="InterPro" id="IPR036670">
    <property type="entry name" value="SecA_X-link_sf"/>
</dbReference>
<dbReference type="NCBIfam" id="TIGR00963">
    <property type="entry name" value="secA"/>
    <property type="match status" value="1"/>
</dbReference>
<dbReference type="PANTHER" id="PTHR30612:SF0">
    <property type="entry name" value="CHLOROPLAST PROTEIN-TRANSPORTING ATPASE"/>
    <property type="match status" value="1"/>
</dbReference>
<dbReference type="PANTHER" id="PTHR30612">
    <property type="entry name" value="SECA INNER MEMBRANE COMPONENT OF SEC PROTEIN SECRETION SYSTEM"/>
    <property type="match status" value="1"/>
</dbReference>
<dbReference type="Pfam" id="PF21090">
    <property type="entry name" value="P-loop_SecA"/>
    <property type="match status" value="1"/>
</dbReference>
<dbReference type="Pfam" id="PF07517">
    <property type="entry name" value="SecA_DEAD"/>
    <property type="match status" value="1"/>
</dbReference>
<dbReference type="Pfam" id="PF01043">
    <property type="entry name" value="SecA_PP_bind"/>
    <property type="match status" value="1"/>
</dbReference>
<dbReference type="Pfam" id="PF07516">
    <property type="entry name" value="SecA_SW"/>
    <property type="match status" value="1"/>
</dbReference>
<dbReference type="PRINTS" id="PR00906">
    <property type="entry name" value="SECA"/>
</dbReference>
<dbReference type="SMART" id="SM00957">
    <property type="entry name" value="SecA_DEAD"/>
    <property type="match status" value="1"/>
</dbReference>
<dbReference type="SMART" id="SM00958">
    <property type="entry name" value="SecA_PP_bind"/>
    <property type="match status" value="1"/>
</dbReference>
<dbReference type="SUPFAM" id="SSF81886">
    <property type="entry name" value="Helical scaffold and wing domains of SecA"/>
    <property type="match status" value="1"/>
</dbReference>
<dbReference type="SUPFAM" id="SSF52540">
    <property type="entry name" value="P-loop containing nucleoside triphosphate hydrolases"/>
    <property type="match status" value="2"/>
</dbReference>
<dbReference type="SUPFAM" id="SSF81767">
    <property type="entry name" value="Pre-protein crosslinking domain of SecA"/>
    <property type="match status" value="1"/>
</dbReference>
<dbReference type="PROSITE" id="PS01312">
    <property type="entry name" value="SECA"/>
    <property type="match status" value="1"/>
</dbReference>
<dbReference type="PROSITE" id="PS51196">
    <property type="entry name" value="SECA_MOTOR_DEAD"/>
    <property type="match status" value="1"/>
</dbReference>
<accession>Q7V975</accession>
<sequence>MLKLLLGDPNARKLKRYQPIVTDINILEEDIALLSDDQLRSKTADFRQQFENVVSFAKQRALLDELLPEAFAVVREAAKRVLGMRHFDVQLIGGMVLHEGQIGEMKTGEGKTLVATLPSYLNALTGRGVHVVTVNDYLARRDAEWMGQVHRFLGLSVGLIQQDMSPAERRRNYACDITYATNSELGFDYLRDNMATDLSEVVQREFQYCVIDEVDSILIDEARTPLIISGQVERPQEKYQQAADVAAALERAAEQGKDGIDPEGDYEVDEKQRSCTLTDEGFAKAEQNLRVRDLFDPADPWAHYITNALKAKELFVRDVNYIVRDGEAVIVDEFTGRVMPGRRWSDGQHQAIEAKEQLAIQPETQTLASITYQNFFLLYPRLAGMTGTAKTEEVEFEKTYKLETSVIPTNQPRARADWVDQVYKTESAKWRAVANETAEIHKQGRPVLVGTTSVEKSELLSSLLSEQEIPHNLLNAKPENVEREAEIVAQAGRAGAVTIATNMAGRGTDIILGGNSDYMARLKLREVLLPRLVRPEEGHRPPVPLQRAAETGGGFAAKAAASNGSHGHVLSEARAIGSLYPCSLTDDTDQFLAELARELVKVWGDRALSVIELEDRISTAAEKAPTDDAQIAALRESIARVKTEYDVVVTQEEVRVREAGGLHVIGTERHESRRVDNQLRGRAGRQGDLGSTRFFLSLEDNLLRIFGGERVASLMNAFRVEEDMPIESGMLTRSLEGAQKKVETYYYDIRKQVFEYDEVMNNQRRAVYAERRRVLEGRGLKKQVIGYGERTMDDIVEAYVNPDLPPEEWDLGQLVSKVQQFVYLLEDLKPEQLQGLSMEELKSFLQEQLRNAYDIKEGQIEQQRPGLMREAERFFILQQIDTLWREHLQAMDALRESVGLRGYGQKDPLIEYKNEGYDMFLEMMANMRRNVIYSMFMFQPAASGQEQA</sequence>
<keyword id="KW-0067">ATP-binding</keyword>
<keyword id="KW-0997">Cell inner membrane</keyword>
<keyword id="KW-1003">Cell membrane</keyword>
<keyword id="KW-0963">Cytoplasm</keyword>
<keyword id="KW-0472">Membrane</keyword>
<keyword id="KW-0547">Nucleotide-binding</keyword>
<keyword id="KW-0653">Protein transport</keyword>
<keyword id="KW-1185">Reference proteome</keyword>
<keyword id="KW-0793">Thylakoid</keyword>
<keyword id="KW-1278">Translocase</keyword>
<keyword id="KW-0811">Translocation</keyword>
<keyword id="KW-0813">Transport</keyword>
<comment type="function">
    <text evidence="1">Part of the Sec protein translocase complex. Interacts with the SecYEG preprotein conducting channel. Has a central role in coupling the hydrolysis of ATP to the transfer of proteins into and across the cell membrane, serving as an ATP-driven molecular motor driving the stepwise translocation of polypeptide chains across the membrane.</text>
</comment>
<comment type="function">
    <text evidence="1">Probably participates in protein translocation into and across both the cytoplasmic and thylakoid membranes in cyanobacterial cells.</text>
</comment>
<comment type="catalytic activity">
    <reaction evidence="1">
        <text>ATP + H2O + cellular proteinSide 1 = ADP + phosphate + cellular proteinSide 2.</text>
        <dbReference type="EC" id="7.4.2.8"/>
    </reaction>
</comment>
<comment type="subunit">
    <text evidence="1">Monomer and homodimer. Part of the essential Sec protein translocation apparatus which comprises SecA, SecYEG and auxiliary proteins SecDF. Other proteins may also be involved.</text>
</comment>
<comment type="subcellular location">
    <subcellularLocation>
        <location evidence="1">Cell inner membrane</location>
        <topology evidence="1">Peripheral membrane protein</topology>
        <orientation evidence="1">Cytoplasmic side</orientation>
    </subcellularLocation>
    <subcellularLocation>
        <location evidence="1">Cellular thylakoid membrane</location>
        <topology evidence="1">Peripheral membrane protein</topology>
        <orientation evidence="1">Cytoplasmic side</orientation>
    </subcellularLocation>
    <subcellularLocation>
        <location evidence="1">Cytoplasm</location>
    </subcellularLocation>
</comment>
<comment type="similarity">
    <text evidence="1">Belongs to the SecA family.</text>
</comment>